<name>CYC6_CHLRE</name>
<feature type="transit peptide" description="Chloroplast">
    <location>
        <begin position="1"/>
        <end position="58"/>
    </location>
</feature>
<feature type="chain" id="PRO_0000023850" description="Cytochrome c6, chloroplastic">
    <location>
        <begin position="59"/>
        <end position="148"/>
    </location>
</feature>
<feature type="binding site" description="covalent" evidence="3">
    <location>
        <position position="72"/>
    </location>
    <ligand>
        <name>heme c</name>
        <dbReference type="ChEBI" id="CHEBI:61717"/>
    </ligand>
</feature>
<feature type="binding site" description="covalent" evidence="3">
    <location>
        <position position="75"/>
    </location>
    <ligand>
        <name>heme c</name>
        <dbReference type="ChEBI" id="CHEBI:61717"/>
    </ligand>
</feature>
<feature type="binding site" description="axial binding residue" evidence="3">
    <location>
        <position position="76"/>
    </location>
    <ligand>
        <name>heme c</name>
        <dbReference type="ChEBI" id="CHEBI:61717"/>
    </ligand>
    <ligandPart>
        <name>Fe</name>
        <dbReference type="ChEBI" id="CHEBI:18248"/>
    </ligandPart>
</feature>
<feature type="binding site" description="axial binding residue" evidence="3">
    <location>
        <position position="118"/>
    </location>
    <ligand>
        <name>heme c</name>
        <dbReference type="ChEBI" id="CHEBI:61717"/>
    </ligand>
    <ligandPart>
        <name>Fe</name>
        <dbReference type="ChEBI" id="CHEBI:18248"/>
    </ligandPart>
</feature>
<feature type="sequence conflict" description="In Ref. 1; AAA33081." evidence="5" ref="1">
    <original>I</original>
    <variation>S</variation>
    <location>
        <position position="107"/>
    </location>
</feature>
<feature type="helix" evidence="6">
    <location>
        <begin position="61"/>
        <end position="71"/>
    </location>
</feature>
<feature type="helix" evidence="6">
    <location>
        <begin position="73"/>
        <end position="76"/>
    </location>
</feature>
<feature type="helix" evidence="6">
    <location>
        <begin position="77"/>
        <end position="79"/>
    </location>
</feature>
<feature type="strand" evidence="6">
    <location>
        <begin position="82"/>
        <end position="84"/>
    </location>
</feature>
<feature type="helix" evidence="6">
    <location>
        <begin position="91"/>
        <end position="97"/>
    </location>
</feature>
<feature type="helix" evidence="6">
    <location>
        <begin position="104"/>
        <end position="113"/>
    </location>
</feature>
<feature type="turn" evidence="6">
    <location>
        <begin position="122"/>
        <end position="124"/>
    </location>
</feature>
<feature type="helix" evidence="6">
    <location>
        <begin position="127"/>
        <end position="143"/>
    </location>
</feature>
<dbReference type="EMBL" id="M67448">
    <property type="protein sequence ID" value="AAB00729.1"/>
    <property type="molecule type" value="Genomic_DNA"/>
</dbReference>
<dbReference type="EMBL" id="J02774">
    <property type="protein sequence ID" value="AAA33081.1"/>
    <property type="molecule type" value="mRNA"/>
</dbReference>
<dbReference type="PIR" id="A27113">
    <property type="entry name" value="CCKM6R"/>
</dbReference>
<dbReference type="RefSeq" id="XP_001698242.1">
    <property type="nucleotide sequence ID" value="XM_001698190.1"/>
</dbReference>
<dbReference type="PDB" id="1CYI">
    <property type="method" value="X-ray"/>
    <property type="resolution" value="1.90 A"/>
    <property type="chains" value="A=59-148"/>
</dbReference>
<dbReference type="PDB" id="1CYJ">
    <property type="method" value="X-ray"/>
    <property type="resolution" value="1.90 A"/>
    <property type="chains" value="A=59-148"/>
</dbReference>
<dbReference type="PDBsum" id="1CYI"/>
<dbReference type="PDBsum" id="1CYJ"/>
<dbReference type="SMR" id="P08197"/>
<dbReference type="BioGRID" id="983605">
    <property type="interactions" value="1"/>
</dbReference>
<dbReference type="PaxDb" id="3055-EDO99527"/>
<dbReference type="EnsemblPlants" id="PNW71360">
    <property type="protein sequence ID" value="PNW71360"/>
    <property type="gene ID" value="CHLRE_16g651050v5"/>
</dbReference>
<dbReference type="Gramene" id="PNW71360">
    <property type="protein sequence ID" value="PNW71360"/>
    <property type="gene ID" value="CHLRE_16g651050v5"/>
</dbReference>
<dbReference type="KEGG" id="cre:CHLRE_16g651050v5"/>
<dbReference type="eggNOG" id="ENOG502SB4X">
    <property type="taxonomic scope" value="Eukaryota"/>
</dbReference>
<dbReference type="HOGENOM" id="CLU_101159_1_0_1"/>
<dbReference type="OrthoDB" id="1930491at2759"/>
<dbReference type="EvolutionaryTrace" id="P08197"/>
<dbReference type="GO" id="GO:0009543">
    <property type="term" value="C:chloroplast thylakoid lumen"/>
    <property type="evidence" value="ECO:0007669"/>
    <property type="project" value="UniProtKB-SubCell"/>
</dbReference>
<dbReference type="GO" id="GO:0009055">
    <property type="term" value="F:electron transfer activity"/>
    <property type="evidence" value="ECO:0007669"/>
    <property type="project" value="InterPro"/>
</dbReference>
<dbReference type="GO" id="GO:0020037">
    <property type="term" value="F:heme binding"/>
    <property type="evidence" value="ECO:0007669"/>
    <property type="project" value="InterPro"/>
</dbReference>
<dbReference type="GO" id="GO:0005506">
    <property type="term" value="F:iron ion binding"/>
    <property type="evidence" value="ECO:0007669"/>
    <property type="project" value="InterPro"/>
</dbReference>
<dbReference type="GO" id="GO:0015979">
    <property type="term" value="P:photosynthesis"/>
    <property type="evidence" value="ECO:0007669"/>
    <property type="project" value="UniProtKB-KW"/>
</dbReference>
<dbReference type="FunFam" id="1.10.760.10:FF:000038">
    <property type="entry name" value="Cytochrome c6"/>
    <property type="match status" value="1"/>
</dbReference>
<dbReference type="Gene3D" id="1.10.760.10">
    <property type="entry name" value="Cytochrome c-like domain"/>
    <property type="match status" value="1"/>
</dbReference>
<dbReference type="HAMAP" id="MF_00594">
    <property type="entry name" value="Cytc_PetJ"/>
    <property type="match status" value="1"/>
</dbReference>
<dbReference type="InterPro" id="IPR009056">
    <property type="entry name" value="Cyt_c-like_dom"/>
</dbReference>
<dbReference type="InterPro" id="IPR036909">
    <property type="entry name" value="Cyt_c-like_dom_sf"/>
</dbReference>
<dbReference type="InterPro" id="IPR023655">
    <property type="entry name" value="Cyt_C6"/>
</dbReference>
<dbReference type="InterPro" id="IPR008168">
    <property type="entry name" value="Cyt_C_IC"/>
</dbReference>
<dbReference type="PANTHER" id="PTHR34688">
    <property type="entry name" value="CYTOCHROME C6, CHLOROPLASTIC"/>
    <property type="match status" value="1"/>
</dbReference>
<dbReference type="PANTHER" id="PTHR34688:SF2">
    <property type="entry name" value="CYTOCHROME C6, CHLOROPLASTIC"/>
    <property type="match status" value="1"/>
</dbReference>
<dbReference type="Pfam" id="PF13442">
    <property type="entry name" value="Cytochrome_CBB3"/>
    <property type="match status" value="1"/>
</dbReference>
<dbReference type="PRINTS" id="PR00605">
    <property type="entry name" value="CYTCHROMECIC"/>
</dbReference>
<dbReference type="SUPFAM" id="SSF46626">
    <property type="entry name" value="Cytochrome c"/>
    <property type="match status" value="1"/>
</dbReference>
<dbReference type="PROSITE" id="PS51007">
    <property type="entry name" value="CYTC"/>
    <property type="match status" value="1"/>
</dbReference>
<sequence length="148" mass="15427">MLQLANRSVRAKAARASQSARSVSCAAAKRGADVAPLTSALAVTASILLTTGAASASAADLALGAQVFNGNCAACHMGGRNSVMPEKTLDKAALEQYLDGGFKVESIIYQVENGKGAMPAWADRLSEEEIQAVAEYVFKQATDAAWKY</sequence>
<reference key="1">
    <citation type="journal article" date="1987" name="J. Biol. Chem.">
        <title>The Cu(II)-repressible plastidic cytochrome c. Cloning and sequence of a complementary DNA for the pre-apoprotein.</title>
        <authorList>
            <person name="Merchant S."/>
            <person name="Bogorad L."/>
        </authorList>
    </citation>
    <scope>NUCLEOTIDE SEQUENCE [MRNA]</scope>
    <scope>INDUCTION</scope>
</reference>
<reference key="2">
    <citation type="journal article" date="1991" name="J. Biol. Chem.">
        <title>Isolation and structural characterization of the Chlamydomonas reinhardtii gene for cytochrome c6. Analysis of the kinetics and metal specificity of its copper-responsive expression.</title>
        <authorList>
            <person name="Hill K.L."/>
            <person name="Li H.H."/>
            <person name="Singer J."/>
            <person name="Merchant S."/>
        </authorList>
    </citation>
    <scope>NUCLEOTIDE SEQUENCE [GENOMIC DNA]</scope>
    <scope>INDUCTION</scope>
</reference>
<reference key="3">
    <citation type="journal article" date="1995" name="J. Mol. Biol.">
        <title>The structure of chloroplast cytochrome c6 at 1.9-A resolution: evidence for functional oligomerization.</title>
        <authorList>
            <person name="Kerfeld C.A."/>
            <person name="Anwar H.P."/>
            <person name="Interrante R."/>
            <person name="Merchant S."/>
            <person name="Yeates T.O."/>
        </authorList>
    </citation>
    <scope>X-RAY CRYSTALLOGRAPHY (1.9 ANGSTROMS) OF 59-148 IN COMPLEX WITH HEME</scope>
    <scope>COFACTOR</scope>
    <scope>SUBUNIT</scope>
</reference>
<proteinExistence type="evidence at protein level"/>
<organism>
    <name type="scientific">Chlamydomonas reinhardtii</name>
    <name type="common">Chlamydomonas smithii</name>
    <dbReference type="NCBI Taxonomy" id="3055"/>
    <lineage>
        <taxon>Eukaryota</taxon>
        <taxon>Viridiplantae</taxon>
        <taxon>Chlorophyta</taxon>
        <taxon>core chlorophytes</taxon>
        <taxon>Chlorophyceae</taxon>
        <taxon>CS clade</taxon>
        <taxon>Chlamydomonadales</taxon>
        <taxon>Chlamydomonadaceae</taxon>
        <taxon>Chlamydomonas</taxon>
    </lineage>
</organism>
<comment type="function">
    <text evidence="5">Functions as an electron carrier between membrane-bound cytochrome b6-f and photosystem I in oxygenic photosynthesis.</text>
</comment>
<comment type="subunit">
    <text evidence="3">Thought to function as a monomer, however 2 crystal forms are observed; a homodimer and homotrimer, suggesting the protein oligomerizes.</text>
</comment>
<comment type="subcellular location">
    <subcellularLocation>
        <location evidence="5">Plastid</location>
        <location evidence="5">Chloroplast thylakoid lumen</location>
    </subcellularLocation>
</comment>
<comment type="induction">
    <text evidence="1 2">Induced in copper-deficient medium.</text>
</comment>
<comment type="PTM">
    <text evidence="3">Binds 1 heme c group covalently per subunit.</text>
</comment>
<comment type="similarity">
    <text evidence="5">Belongs to the cytochrome c family. PetJ subfamily.</text>
</comment>
<gene>
    <name type="primary">petJ</name>
</gene>
<keyword id="KW-0002">3D-structure</keyword>
<keyword id="KW-0150">Chloroplast</keyword>
<keyword id="KW-0249">Electron transport</keyword>
<keyword id="KW-0349">Heme</keyword>
<keyword id="KW-0408">Iron</keyword>
<keyword id="KW-0479">Metal-binding</keyword>
<keyword id="KW-0602">Photosynthesis</keyword>
<keyword id="KW-0934">Plastid</keyword>
<keyword id="KW-0793">Thylakoid</keyword>
<keyword id="KW-0809">Transit peptide</keyword>
<keyword id="KW-0813">Transport</keyword>
<accession>P08197</accession>
<evidence type="ECO:0000269" key="1">
    <source>
    </source>
</evidence>
<evidence type="ECO:0000269" key="2">
    <source>
    </source>
</evidence>
<evidence type="ECO:0000269" key="3">
    <source>
    </source>
</evidence>
<evidence type="ECO:0000303" key="4">
    <source>
    </source>
</evidence>
<evidence type="ECO:0000305" key="5"/>
<evidence type="ECO:0007829" key="6">
    <source>
        <dbReference type="PDB" id="1CYI"/>
    </source>
</evidence>
<protein>
    <recommendedName>
        <fullName>Cytochrome c6, chloroplastic</fullName>
    </recommendedName>
    <alternativeName>
        <fullName evidence="4">Cytochrome c-552</fullName>
    </alternativeName>
    <alternativeName>
        <fullName>Cytochrome c-553</fullName>
    </alternativeName>
    <alternativeName>
        <fullName>Cytochrome c553</fullName>
    </alternativeName>
    <alternativeName>
        <fullName>Soluble cytochrome f</fullName>
    </alternativeName>
</protein>